<comment type="function">
    <text evidence="1">The phosphoenolpyruvate-dependent sugar phosphotransferase system (sugar PTS), a major carbohydrate active -transport system, catalyzes the phosphorylation of incoming sugar substrates concomitantly with their translocation across the cell membrane.</text>
</comment>
<comment type="subcellular location">
    <subcellularLocation>
        <location evidence="3">Cytoplasm</location>
    </subcellularLocation>
</comment>
<comment type="domain">
    <text>The EIIA domain is phosphorylated by phospho-HPr on a histidyl residue. Then, it transfers the phosphoryl group to the EIIB domain.</text>
</comment>
<accession>P36881</accession>
<accession>P75658</accession>
<protein>
    <recommendedName>
        <fullName>Putative phosphotransferase enzyme IIA component YadI</fullName>
    </recommendedName>
    <alternativeName>
        <fullName>Putative PTS system EIIA component</fullName>
    </alternativeName>
</protein>
<evidence type="ECO:0000250" key="1"/>
<evidence type="ECO:0000255" key="2">
    <source>
        <dbReference type="PROSITE-ProRule" id="PRU00419"/>
    </source>
</evidence>
<evidence type="ECO:0000305" key="3"/>
<gene>
    <name type="primary">yadI</name>
    <name type="ordered locus">b0129</name>
    <name type="ordered locus">JW0125</name>
</gene>
<feature type="chain" id="PRO_0000186708" description="Putative phosphotransferase enzyme IIA component YadI">
    <location>
        <begin position="1"/>
        <end position="146"/>
    </location>
</feature>
<feature type="domain" description="PTS EIIA type-4" evidence="2">
    <location>
        <begin position="1"/>
        <end position="124"/>
    </location>
</feature>
<feature type="active site" description="Tele-phosphohistidine intermediate" evidence="2">
    <location>
        <position position="9"/>
    </location>
</feature>
<organism>
    <name type="scientific">Escherichia coli (strain K12)</name>
    <dbReference type="NCBI Taxonomy" id="83333"/>
    <lineage>
        <taxon>Bacteria</taxon>
        <taxon>Pseudomonadati</taxon>
        <taxon>Pseudomonadota</taxon>
        <taxon>Gammaproteobacteria</taxon>
        <taxon>Enterobacterales</taxon>
        <taxon>Enterobacteriaceae</taxon>
        <taxon>Escherichia</taxon>
    </lineage>
</organism>
<reference key="1">
    <citation type="journal article" date="1994" name="Nucleic Acids Res.">
        <title>Systematic sequencing of the Escherichia coli genome: analysis of the 2.4-4.1 min (110,917-193,643 bp) region.</title>
        <authorList>
            <person name="Fujita N."/>
            <person name="Mori H."/>
            <person name="Yura T."/>
            <person name="Ishihama A."/>
        </authorList>
    </citation>
    <scope>NUCLEOTIDE SEQUENCE [LARGE SCALE GENOMIC DNA]</scope>
    <source>
        <strain>K12 / W3110 / ATCC 27325 / DSM 5911</strain>
    </source>
</reference>
<reference key="2">
    <citation type="journal article" date="1997" name="Science">
        <title>The complete genome sequence of Escherichia coli K-12.</title>
        <authorList>
            <person name="Blattner F.R."/>
            <person name="Plunkett G. III"/>
            <person name="Bloch C.A."/>
            <person name="Perna N.T."/>
            <person name="Burland V."/>
            <person name="Riley M."/>
            <person name="Collado-Vides J."/>
            <person name="Glasner J.D."/>
            <person name="Rode C.K."/>
            <person name="Mayhew G.F."/>
            <person name="Gregor J."/>
            <person name="Davis N.W."/>
            <person name="Kirkpatrick H.A."/>
            <person name="Goeden M.A."/>
            <person name="Rose D.J."/>
            <person name="Mau B."/>
            <person name="Shao Y."/>
        </authorList>
    </citation>
    <scope>NUCLEOTIDE SEQUENCE [LARGE SCALE GENOMIC DNA]</scope>
    <source>
        <strain>K12 / MG1655 / ATCC 47076</strain>
    </source>
</reference>
<reference key="3">
    <citation type="journal article" date="2006" name="Mol. Syst. Biol.">
        <title>Highly accurate genome sequences of Escherichia coli K-12 strains MG1655 and W3110.</title>
        <authorList>
            <person name="Hayashi K."/>
            <person name="Morooka N."/>
            <person name="Yamamoto Y."/>
            <person name="Fujita K."/>
            <person name="Isono K."/>
            <person name="Choi S."/>
            <person name="Ohtsubo E."/>
            <person name="Baba T."/>
            <person name="Wanner B.L."/>
            <person name="Mori H."/>
            <person name="Horiuchi T."/>
        </authorList>
    </citation>
    <scope>NUCLEOTIDE SEQUENCE [LARGE SCALE GENOMIC DNA]</scope>
    <scope>SEQUENCE REVISION</scope>
    <source>
        <strain>K12 / W3110 / ATCC 27325 / DSM 5911</strain>
    </source>
</reference>
<sequence>MLGWVITCHDDRAQEILDALEKKHGALLQCRAVNFWRGLSSNMLSRMMCDALHEADSGEGVIFLTDIAGAPPYRVASLLSHKHSRCEVISGVTLPLIEQMMACRETMTSSEFRERIVELGAPEVSSLWHQQQKNPPFVLKHNLYEY</sequence>
<name>YADI_ECOLI</name>
<keyword id="KW-0963">Cytoplasm</keyword>
<keyword id="KW-0418">Kinase</keyword>
<keyword id="KW-0598">Phosphotransferase system</keyword>
<keyword id="KW-1185">Reference proteome</keyword>
<keyword id="KW-0762">Sugar transport</keyword>
<keyword id="KW-0808">Transferase</keyword>
<keyword id="KW-0813">Transport</keyword>
<dbReference type="EMBL" id="U00096">
    <property type="protein sequence ID" value="AAC73240.1"/>
    <property type="molecule type" value="Genomic_DNA"/>
</dbReference>
<dbReference type="EMBL" id="AP009048">
    <property type="protein sequence ID" value="BAB96706.2"/>
    <property type="molecule type" value="Genomic_DNA"/>
</dbReference>
<dbReference type="PIR" id="A64736">
    <property type="entry name" value="A64736"/>
</dbReference>
<dbReference type="RefSeq" id="NP_414671.1">
    <property type="nucleotide sequence ID" value="NC_000913.3"/>
</dbReference>
<dbReference type="RefSeq" id="WP_000901987.1">
    <property type="nucleotide sequence ID" value="NZ_STEB01000010.1"/>
</dbReference>
<dbReference type="SMR" id="P36881"/>
<dbReference type="BioGRID" id="4259409">
    <property type="interactions" value="1"/>
</dbReference>
<dbReference type="FunCoup" id="P36881">
    <property type="interactions" value="5"/>
</dbReference>
<dbReference type="STRING" id="511145.b0129"/>
<dbReference type="PaxDb" id="511145-b0129"/>
<dbReference type="DNASU" id="947397"/>
<dbReference type="EnsemblBacteria" id="AAC73240">
    <property type="protein sequence ID" value="AAC73240"/>
    <property type="gene ID" value="b0129"/>
</dbReference>
<dbReference type="GeneID" id="947397"/>
<dbReference type="KEGG" id="ecj:JW0125"/>
<dbReference type="KEGG" id="eco:b0129"/>
<dbReference type="KEGG" id="ecoc:C3026_00550"/>
<dbReference type="PATRIC" id="fig|1411691.4.peg.2153"/>
<dbReference type="EchoBASE" id="EB2227"/>
<dbReference type="eggNOG" id="COG2893">
    <property type="taxonomic scope" value="Bacteria"/>
</dbReference>
<dbReference type="HOGENOM" id="CLU_123235_1_0_6"/>
<dbReference type="InParanoid" id="P36881"/>
<dbReference type="OMA" id="GWVIACH"/>
<dbReference type="OrthoDB" id="3183705at2"/>
<dbReference type="PhylomeDB" id="P36881"/>
<dbReference type="BioCyc" id="EcoCyc:AGAX-MONOMER"/>
<dbReference type="BioCyc" id="MetaCyc:AGAX-MONOMER"/>
<dbReference type="PRO" id="PR:P36881"/>
<dbReference type="Proteomes" id="UP000000625">
    <property type="component" value="Chromosome"/>
</dbReference>
<dbReference type="GO" id="GO:0005737">
    <property type="term" value="C:cytoplasm"/>
    <property type="evidence" value="ECO:0007669"/>
    <property type="project" value="UniProtKB-SubCell"/>
</dbReference>
<dbReference type="GO" id="GO:1902495">
    <property type="term" value="C:transmembrane transporter complex"/>
    <property type="evidence" value="ECO:0000318"/>
    <property type="project" value="GO_Central"/>
</dbReference>
<dbReference type="GO" id="GO:0016301">
    <property type="term" value="F:kinase activity"/>
    <property type="evidence" value="ECO:0007669"/>
    <property type="project" value="UniProtKB-KW"/>
</dbReference>
<dbReference type="GO" id="GO:0008982">
    <property type="term" value="F:protein-N(PI)-phosphohistidine-sugar phosphotransferase activity"/>
    <property type="evidence" value="ECO:0000318"/>
    <property type="project" value="GO_Central"/>
</dbReference>
<dbReference type="GO" id="GO:0009401">
    <property type="term" value="P:phosphoenolpyruvate-dependent sugar phosphotransferase system"/>
    <property type="evidence" value="ECO:0000318"/>
    <property type="project" value="GO_Central"/>
</dbReference>
<dbReference type="CDD" id="cd00006">
    <property type="entry name" value="PTS_IIA_man"/>
    <property type="match status" value="1"/>
</dbReference>
<dbReference type="Gene3D" id="3.40.50.510">
    <property type="entry name" value="Phosphotransferase system, mannose-type IIA component"/>
    <property type="match status" value="1"/>
</dbReference>
<dbReference type="InterPro" id="IPR051471">
    <property type="entry name" value="Bacterial_PTS_sugar_comp"/>
</dbReference>
<dbReference type="InterPro" id="IPR004701">
    <property type="entry name" value="PTS_EIIA_man-typ"/>
</dbReference>
<dbReference type="InterPro" id="IPR036662">
    <property type="entry name" value="PTS_EIIA_man-typ_sf"/>
</dbReference>
<dbReference type="InterPro" id="IPR033887">
    <property type="entry name" value="PTS_IIA_man"/>
</dbReference>
<dbReference type="PANTHER" id="PTHR33799">
    <property type="entry name" value="PTS PERMEASE-RELATED-RELATED"/>
    <property type="match status" value="1"/>
</dbReference>
<dbReference type="PANTHER" id="PTHR33799:SF1">
    <property type="entry name" value="PTS SYSTEM MANNOSE-SPECIFIC EIIAB COMPONENT-RELATED"/>
    <property type="match status" value="1"/>
</dbReference>
<dbReference type="Pfam" id="PF03610">
    <property type="entry name" value="EIIA-man"/>
    <property type="match status" value="1"/>
</dbReference>
<dbReference type="SUPFAM" id="SSF53062">
    <property type="entry name" value="PTS system fructose IIA component-like"/>
    <property type="match status" value="1"/>
</dbReference>
<dbReference type="PROSITE" id="PS51096">
    <property type="entry name" value="PTS_EIIA_TYPE_4"/>
    <property type="match status" value="1"/>
</dbReference>
<proteinExistence type="inferred from homology"/>